<organismHost>
    <name type="scientific">Acanthamoeba polyphaga</name>
    <name type="common">Amoeba</name>
    <dbReference type="NCBI Taxonomy" id="5757"/>
</organismHost>
<organism>
    <name type="scientific">Sputnik virophage</name>
    <dbReference type="NCBI Taxonomy" id="543939"/>
    <lineage>
        <taxon>Viruses</taxon>
        <taxon>Varidnaviria</taxon>
        <taxon>Bamfordvirae</taxon>
        <taxon>Preplasmiviricota</taxon>
        <taxon>Maveriviricetes</taxon>
        <taxon>Priklausovirales</taxon>
        <taxon>Lavidaviridae</taxon>
        <taxon>Sputnikvirus</taxon>
        <taxon>Mimivirus-dependent virus Sputnik</taxon>
    </lineage>
</organism>
<dbReference type="EMBL" id="EU606015">
    <property type="protein sequence ID" value="ACF17002.1"/>
    <property type="molecule type" value="Genomic_DNA"/>
</dbReference>
<dbReference type="RefSeq" id="YP_002122379.1">
    <property type="nucleotide sequence ID" value="NC_011132.1"/>
</dbReference>
<dbReference type="KEGG" id="vg:6760334"/>
<dbReference type="Proteomes" id="UP000001863">
    <property type="component" value="Segment"/>
</dbReference>
<dbReference type="Gene3D" id="2.60.120.1100">
    <property type="match status" value="1"/>
</dbReference>
<dbReference type="InterPro" id="IPR049412">
    <property type="entry name" value="V18-like_jelly_roll"/>
</dbReference>
<dbReference type="InterPro" id="IPR049413">
    <property type="entry name" value="V18/19-like_jelly_roll_sf"/>
</dbReference>
<dbReference type="Pfam" id="PF21507">
    <property type="entry name" value="V18-19"/>
    <property type="match status" value="1"/>
</dbReference>
<name>V18_SPTNK</name>
<keyword id="KW-1185">Reference proteome</keyword>
<gene>
    <name type="ORF">ORF18</name>
</gene>
<feature type="chain" id="PRO_0000369826" description="Uncharacterized protein V18">
    <location>
        <begin position="1"/>
        <end position="167"/>
    </location>
</feature>
<reference key="1">
    <citation type="journal article" date="2008" name="Nature">
        <title>The virophage as a unique parasite of the giant mimivirus.</title>
        <authorList>
            <person name="La Scola B."/>
            <person name="Desnues C."/>
            <person name="Pagnier I."/>
            <person name="Robert C."/>
            <person name="Barrassi L."/>
            <person name="Fournous G."/>
            <person name="Merchat M."/>
            <person name="Suzan-Monti M."/>
            <person name="Forterre P."/>
            <person name="Koonin E."/>
            <person name="Raoult D."/>
        </authorList>
    </citation>
    <scope>NUCLEOTIDE SEQUENCE [GENOMIC DNA]</scope>
</reference>
<accession>B4YNF8</accession>
<sequence>MSYSHSIKDCQEPDTVYYDILIPFKPNDQGFSPAIFQAQLTQPIVHNPSEYFLSVVRFSIPTQNIPLTIPQIQPYPNTNVNNTIYSVSIGYNGTYSSQNFVQFDPSLTSPNIPAPNAPTVTSPNVEVTPYYYIYDYSTFLQMINTALENAFNEISAPVGADAPFFFL</sequence>
<proteinExistence type="predicted"/>
<protein>
    <recommendedName>
        <fullName>Uncharacterized protein V18</fullName>
    </recommendedName>
</protein>